<name>LSPA_RICAE</name>
<feature type="chain" id="PRO_1000203595" description="Lipoprotein signal peptidase">
    <location>
        <begin position="1"/>
        <end position="201"/>
    </location>
</feature>
<feature type="transmembrane region" description="Helical" evidence="1">
    <location>
        <begin position="73"/>
        <end position="93"/>
    </location>
</feature>
<feature type="transmembrane region" description="Helical" evidence="1">
    <location>
        <begin position="97"/>
        <end position="117"/>
    </location>
</feature>
<feature type="transmembrane region" description="Helical" evidence="1">
    <location>
        <begin position="135"/>
        <end position="155"/>
    </location>
</feature>
<feature type="active site" evidence="1">
    <location>
        <position position="126"/>
    </location>
</feature>
<feature type="active site" evidence="1">
    <location>
        <position position="144"/>
    </location>
</feature>
<organism>
    <name type="scientific">Rickettsia africae (strain ESF-5)</name>
    <dbReference type="NCBI Taxonomy" id="347255"/>
    <lineage>
        <taxon>Bacteria</taxon>
        <taxon>Pseudomonadati</taxon>
        <taxon>Pseudomonadota</taxon>
        <taxon>Alphaproteobacteria</taxon>
        <taxon>Rickettsiales</taxon>
        <taxon>Rickettsiaceae</taxon>
        <taxon>Rickettsieae</taxon>
        <taxon>Rickettsia</taxon>
        <taxon>spotted fever group</taxon>
    </lineage>
</organism>
<accession>C3PND1</accession>
<proteinExistence type="inferred from homology"/>
<reference key="1">
    <citation type="journal article" date="2009" name="BMC Genomics">
        <title>Analysis of the Rickettsia africae genome reveals that virulence acquisition in Rickettsia species may be explained by genome reduction.</title>
        <authorList>
            <person name="Fournier P.-E."/>
            <person name="El Karkouri K."/>
            <person name="Leroy Q."/>
            <person name="Robert C."/>
            <person name="Giumelli B."/>
            <person name="Renesto P."/>
            <person name="Socolovschi C."/>
            <person name="Parola P."/>
            <person name="Audic S."/>
            <person name="Raoult D."/>
        </authorList>
    </citation>
    <scope>NUCLEOTIDE SEQUENCE [LARGE SCALE GENOMIC DNA]</scope>
    <source>
        <strain>ESF-5</strain>
    </source>
</reference>
<keyword id="KW-0064">Aspartyl protease</keyword>
<keyword id="KW-0997">Cell inner membrane</keyword>
<keyword id="KW-1003">Cell membrane</keyword>
<keyword id="KW-0378">Hydrolase</keyword>
<keyword id="KW-0472">Membrane</keyword>
<keyword id="KW-0645">Protease</keyword>
<keyword id="KW-0812">Transmembrane</keyword>
<keyword id="KW-1133">Transmembrane helix</keyword>
<dbReference type="EC" id="3.4.23.36" evidence="1"/>
<dbReference type="EMBL" id="CP001612">
    <property type="protein sequence ID" value="ACP53441.1"/>
    <property type="molecule type" value="Genomic_DNA"/>
</dbReference>
<dbReference type="RefSeq" id="WP_012719664.1">
    <property type="nucleotide sequence ID" value="NC_012633.1"/>
</dbReference>
<dbReference type="SMR" id="C3PND1"/>
<dbReference type="KEGG" id="raf:RAF_ORF0520"/>
<dbReference type="HOGENOM" id="CLU_083252_4_3_5"/>
<dbReference type="UniPathway" id="UPA00665"/>
<dbReference type="Proteomes" id="UP000002305">
    <property type="component" value="Chromosome"/>
</dbReference>
<dbReference type="GO" id="GO:0005886">
    <property type="term" value="C:plasma membrane"/>
    <property type="evidence" value="ECO:0007669"/>
    <property type="project" value="UniProtKB-SubCell"/>
</dbReference>
<dbReference type="GO" id="GO:0004190">
    <property type="term" value="F:aspartic-type endopeptidase activity"/>
    <property type="evidence" value="ECO:0007669"/>
    <property type="project" value="UniProtKB-UniRule"/>
</dbReference>
<dbReference type="GO" id="GO:0006508">
    <property type="term" value="P:proteolysis"/>
    <property type="evidence" value="ECO:0007669"/>
    <property type="project" value="UniProtKB-KW"/>
</dbReference>
<dbReference type="HAMAP" id="MF_00161">
    <property type="entry name" value="LspA"/>
    <property type="match status" value="1"/>
</dbReference>
<dbReference type="InterPro" id="IPR001872">
    <property type="entry name" value="Peptidase_A8"/>
</dbReference>
<dbReference type="NCBIfam" id="TIGR00077">
    <property type="entry name" value="lspA"/>
    <property type="match status" value="1"/>
</dbReference>
<dbReference type="PANTHER" id="PTHR33695">
    <property type="entry name" value="LIPOPROTEIN SIGNAL PEPTIDASE"/>
    <property type="match status" value="1"/>
</dbReference>
<dbReference type="PANTHER" id="PTHR33695:SF1">
    <property type="entry name" value="LIPOPROTEIN SIGNAL PEPTIDASE"/>
    <property type="match status" value="1"/>
</dbReference>
<dbReference type="Pfam" id="PF01252">
    <property type="entry name" value="Peptidase_A8"/>
    <property type="match status" value="1"/>
</dbReference>
<dbReference type="PRINTS" id="PR00781">
    <property type="entry name" value="LIPOSIGPTASE"/>
</dbReference>
<dbReference type="PROSITE" id="PS00855">
    <property type="entry name" value="SPASE_II"/>
    <property type="match status" value="1"/>
</dbReference>
<protein>
    <recommendedName>
        <fullName evidence="1">Lipoprotein signal peptidase</fullName>
        <ecNumber evidence="1">3.4.23.36</ecNumber>
    </recommendedName>
    <alternativeName>
        <fullName evidence="1">Prolipoprotein signal peptidase</fullName>
    </alternativeName>
    <alternativeName>
        <fullName evidence="1">Signal peptidase II</fullName>
        <shortName evidence="1">SPase II</shortName>
    </alternativeName>
</protein>
<evidence type="ECO:0000255" key="1">
    <source>
        <dbReference type="HAMAP-Rule" id="MF_00161"/>
    </source>
</evidence>
<gene>
    <name evidence="1" type="primary">lspA</name>
    <name type="ordered locus">RAF_ORF0520</name>
</gene>
<sequence length="201" mass="23483">MLPLLKKLYLTFARSSRIIITLVIIDQLSKWWFIDNLRWKPDLMLKFTSFLNMVYTWNYGISFGLMREYYQYSNAIFLITNTIIVCYLYYLMIRSKTIGSFAGYSFVIGGAVGNLIDRFFRGAVFDFIHFHYQNYSFPVFNLADCFITIGVIILIEDYYSTKKVIEEKAKGNYDNAQIEAMAEKIRNTDKGGNDKIASLQN</sequence>
<comment type="function">
    <text evidence="1">This protein specifically catalyzes the removal of signal peptides from prolipoproteins.</text>
</comment>
<comment type="catalytic activity">
    <reaction evidence="1">
        <text>Release of signal peptides from bacterial membrane prolipoproteins. Hydrolyzes -Xaa-Yaa-Zaa-|-(S,diacylglyceryl)Cys-, in which Xaa is hydrophobic (preferably Leu), and Yaa (Ala or Ser) and Zaa (Gly or Ala) have small, neutral side chains.</text>
        <dbReference type="EC" id="3.4.23.36"/>
    </reaction>
</comment>
<comment type="pathway">
    <text evidence="1">Protein modification; lipoprotein biosynthesis (signal peptide cleavage).</text>
</comment>
<comment type="subcellular location">
    <subcellularLocation>
        <location evidence="1">Cell inner membrane</location>
        <topology evidence="1">Multi-pass membrane protein</topology>
    </subcellularLocation>
</comment>
<comment type="similarity">
    <text evidence="1">Belongs to the peptidase A8 family.</text>
</comment>